<comment type="similarity">
    <text evidence="1">Belongs to the UPF0371 family.</text>
</comment>
<name>Y424_CLOBK</name>
<protein>
    <recommendedName>
        <fullName evidence="1">UPF0371 protein CLD_0424</fullName>
    </recommendedName>
</protein>
<accession>B1IEY8</accession>
<feature type="chain" id="PRO_1000199742" description="UPF0371 protein CLD_0424">
    <location>
        <begin position="1"/>
        <end position="502"/>
    </location>
</feature>
<sequence length="502" mass="56694">MRIGFDHEKYLEEQSKYILERVNNYDKLYLEFGGKLLFDLHAKRVLPGFDENAKIKLLHKLKEKVEIIICLYAGDIERNKIRGDFGITYDVDVLRLIDDLRGYDLEVNSVVITRYSGQPATNIFINKLERRGIKVYRHEATKGYPTDVDTIVSDEGYGKNPYIETTKPIVVVTAPGPGSGKLATCLSQLYHEYKRGNVAGYSKFETFPVWNVPLKHPLNIAYESATVDLKDVNMIDSFHFDAYNKVAVNYNRDIESFPVLKRIIEKITGEESVYKSPTDMGVNRVGFGIVDDEVVKEASKQEIIRRAFKTACEYKKGYVDKETFHRAKLIMEEMNLKEEDRKVVIPAREYAAKLKERANKSETCTVVALELEDGTILTGRSSELMDGTAAVILNAVKHYANISDEIHLISPVILEPIINLKAKTLGSKRTALSCEEVLIALSICAATNPTAQVAMGKLPMLKGCQAHSTTILSTNEEQTFRKLGIDVTCDPEYISESLYYNN</sequence>
<proteinExistence type="inferred from homology"/>
<gene>
    <name type="ordered locus">CLD_0424</name>
</gene>
<organism>
    <name type="scientific">Clostridium botulinum (strain Okra / Type B1)</name>
    <dbReference type="NCBI Taxonomy" id="498213"/>
    <lineage>
        <taxon>Bacteria</taxon>
        <taxon>Bacillati</taxon>
        <taxon>Bacillota</taxon>
        <taxon>Clostridia</taxon>
        <taxon>Eubacteriales</taxon>
        <taxon>Clostridiaceae</taxon>
        <taxon>Clostridium</taxon>
    </lineage>
</organism>
<reference key="1">
    <citation type="journal article" date="2007" name="PLoS ONE">
        <title>Analysis of the neurotoxin complex genes in Clostridium botulinum A1-A4 and B1 strains: BoNT/A3, /Ba4 and /B1 clusters are located within plasmids.</title>
        <authorList>
            <person name="Smith T.J."/>
            <person name="Hill K.K."/>
            <person name="Foley B.T."/>
            <person name="Detter J.C."/>
            <person name="Munk A.C."/>
            <person name="Bruce D.C."/>
            <person name="Doggett N.A."/>
            <person name="Smith L.A."/>
            <person name="Marks J.D."/>
            <person name="Xie G."/>
            <person name="Brettin T.S."/>
        </authorList>
    </citation>
    <scope>NUCLEOTIDE SEQUENCE [LARGE SCALE GENOMIC DNA]</scope>
    <source>
        <strain>Okra / Type B1</strain>
    </source>
</reference>
<evidence type="ECO:0000255" key="1">
    <source>
        <dbReference type="HAMAP-Rule" id="MF_01567"/>
    </source>
</evidence>
<dbReference type="EMBL" id="CP000939">
    <property type="protein sequence ID" value="ACA45638.1"/>
    <property type="molecule type" value="Genomic_DNA"/>
</dbReference>
<dbReference type="RefSeq" id="WP_004451314.1">
    <property type="nucleotide sequence ID" value="NC_010516.1"/>
</dbReference>
<dbReference type="SMR" id="B1IEY8"/>
<dbReference type="KEGG" id="cbb:CLD_0424"/>
<dbReference type="HOGENOM" id="CLU_046981_0_0_9"/>
<dbReference type="Proteomes" id="UP000008541">
    <property type="component" value="Chromosome"/>
</dbReference>
<dbReference type="Gene3D" id="1.20.1570.10">
    <property type="entry name" value="dip2346 domain like"/>
    <property type="match status" value="1"/>
</dbReference>
<dbReference type="Gene3D" id="3.10.630.10">
    <property type="entry name" value="dip2346 domain like"/>
    <property type="match status" value="1"/>
</dbReference>
<dbReference type="Gene3D" id="3.40.140.40">
    <property type="entry name" value="Domain of unknown function (DUF1846), C-terminal subdomain"/>
    <property type="match status" value="1"/>
</dbReference>
<dbReference type="HAMAP" id="MF_01567">
    <property type="entry name" value="UPF0371"/>
    <property type="match status" value="1"/>
</dbReference>
<dbReference type="InterPro" id="IPR014999">
    <property type="entry name" value="DUF1846"/>
</dbReference>
<dbReference type="InterPro" id="IPR048441">
    <property type="entry name" value="DUF1846_C"/>
</dbReference>
<dbReference type="InterPro" id="IPR048496">
    <property type="entry name" value="DUF1846_N"/>
</dbReference>
<dbReference type="NCBIfam" id="NF010184">
    <property type="entry name" value="PRK13663.1"/>
    <property type="match status" value="1"/>
</dbReference>
<dbReference type="Pfam" id="PF08903">
    <property type="entry name" value="DUF1846"/>
    <property type="match status" value="1"/>
</dbReference>
<dbReference type="Pfam" id="PF20921">
    <property type="entry name" value="DUF1846_C"/>
    <property type="match status" value="1"/>
</dbReference>
<dbReference type="PIRSF" id="PIRSF033132">
    <property type="entry name" value="DUF1846"/>
    <property type="match status" value="1"/>
</dbReference>